<sequence length="163" mass="18291">MAKESSFDIVSKVELPEVQNAIQTALKEIGTRYDFKGSKSSITLEGDELVLVSDDEFKMNQLKDVLVGKLIKRNVPTKNIEYSKLENASGGTVRQRGKLVQGIDKENAKKINNLIKKSGLKVKSQVQDDQVRVTGKNKDDLQQIIAMVREADLPIDVQFINFR</sequence>
<protein>
    <recommendedName>
        <fullName evidence="1">Nucleotide-binding protein BLi01194</fullName>
    </recommendedName>
</protein>
<feature type="chain" id="PRO_0000261917" description="Nucleotide-binding protein BLi01194">
    <location>
        <begin position="1"/>
        <end position="163"/>
    </location>
</feature>
<keyword id="KW-0547">Nucleotide-binding</keyword>
<keyword id="KW-1185">Reference proteome</keyword>
<name>Y1194_BACLD</name>
<accession>Q65LG2</accession>
<accession>Q62WV3</accession>
<organism>
    <name type="scientific">Bacillus licheniformis (strain ATCC 14580 / DSM 13 / JCM 2505 / CCUG 7422 / NBRC 12200 / NCIMB 9375 / NCTC 10341 / NRRL NRS-1264 / Gibson 46)</name>
    <dbReference type="NCBI Taxonomy" id="279010"/>
    <lineage>
        <taxon>Bacteria</taxon>
        <taxon>Bacillati</taxon>
        <taxon>Bacillota</taxon>
        <taxon>Bacilli</taxon>
        <taxon>Bacillales</taxon>
        <taxon>Bacillaceae</taxon>
        <taxon>Bacillus</taxon>
    </lineage>
</organism>
<proteinExistence type="inferred from homology"/>
<comment type="function">
    <text evidence="1">Nucleotide-binding protein.</text>
</comment>
<comment type="similarity">
    <text evidence="1">Belongs to the YajQ family.</text>
</comment>
<dbReference type="EMBL" id="AE017333">
    <property type="protein sequence ID" value="AAU40102.1"/>
    <property type="molecule type" value="Genomic_DNA"/>
</dbReference>
<dbReference type="EMBL" id="CP000002">
    <property type="protein sequence ID" value="AAU22755.1"/>
    <property type="molecule type" value="Genomic_DNA"/>
</dbReference>
<dbReference type="RefSeq" id="WP_003180528.1">
    <property type="nucleotide sequence ID" value="NC_006322.1"/>
</dbReference>
<dbReference type="SMR" id="Q65LG2"/>
<dbReference type="STRING" id="279010.BL01306"/>
<dbReference type="KEGG" id="bld:BLi01194"/>
<dbReference type="KEGG" id="bli:BL01306"/>
<dbReference type="eggNOG" id="COG1666">
    <property type="taxonomic scope" value="Bacteria"/>
</dbReference>
<dbReference type="HOGENOM" id="CLU_099839_1_0_9"/>
<dbReference type="Proteomes" id="UP000000606">
    <property type="component" value="Chromosome"/>
</dbReference>
<dbReference type="GO" id="GO:0005829">
    <property type="term" value="C:cytosol"/>
    <property type="evidence" value="ECO:0007669"/>
    <property type="project" value="TreeGrafter"/>
</dbReference>
<dbReference type="GO" id="GO:0000166">
    <property type="term" value="F:nucleotide binding"/>
    <property type="evidence" value="ECO:0007669"/>
    <property type="project" value="TreeGrafter"/>
</dbReference>
<dbReference type="CDD" id="cd11740">
    <property type="entry name" value="YajQ_like"/>
    <property type="match status" value="1"/>
</dbReference>
<dbReference type="FunFam" id="3.30.70.990:FF:000002">
    <property type="entry name" value="UPF0234 protein LEP1GSC067_4943"/>
    <property type="match status" value="1"/>
</dbReference>
<dbReference type="FunFam" id="3.30.70.860:FF:000003">
    <property type="entry name" value="UPF0234 protein YBT020_06460"/>
    <property type="match status" value="1"/>
</dbReference>
<dbReference type="Gene3D" id="3.30.70.860">
    <property type="match status" value="1"/>
</dbReference>
<dbReference type="Gene3D" id="3.30.70.990">
    <property type="entry name" value="YajQ-like, domain 2"/>
    <property type="match status" value="1"/>
</dbReference>
<dbReference type="HAMAP" id="MF_00632">
    <property type="entry name" value="YajQ"/>
    <property type="match status" value="1"/>
</dbReference>
<dbReference type="InterPro" id="IPR007551">
    <property type="entry name" value="DUF520"/>
</dbReference>
<dbReference type="InterPro" id="IPR035571">
    <property type="entry name" value="UPF0234-like_C"/>
</dbReference>
<dbReference type="InterPro" id="IPR035570">
    <property type="entry name" value="UPF0234_N"/>
</dbReference>
<dbReference type="InterPro" id="IPR036183">
    <property type="entry name" value="YajQ-like_sf"/>
</dbReference>
<dbReference type="NCBIfam" id="NF003819">
    <property type="entry name" value="PRK05412.1"/>
    <property type="match status" value="1"/>
</dbReference>
<dbReference type="PANTHER" id="PTHR30476">
    <property type="entry name" value="UPF0234 PROTEIN YAJQ"/>
    <property type="match status" value="1"/>
</dbReference>
<dbReference type="PANTHER" id="PTHR30476:SF0">
    <property type="entry name" value="UPF0234 PROTEIN YAJQ"/>
    <property type="match status" value="1"/>
</dbReference>
<dbReference type="Pfam" id="PF04461">
    <property type="entry name" value="DUF520"/>
    <property type="match status" value="1"/>
</dbReference>
<dbReference type="SUPFAM" id="SSF89963">
    <property type="entry name" value="YajQ-like"/>
    <property type="match status" value="2"/>
</dbReference>
<gene>
    <name type="ordered locus">BLi01194</name>
    <name type="ordered locus">BL01306</name>
</gene>
<reference key="1">
    <citation type="journal article" date="2004" name="J. Mol. Microbiol. Biotechnol.">
        <title>The complete genome sequence of Bacillus licheniformis DSM13, an organism with great industrial potential.</title>
        <authorList>
            <person name="Veith B."/>
            <person name="Herzberg C."/>
            <person name="Steckel S."/>
            <person name="Feesche J."/>
            <person name="Maurer K.H."/>
            <person name="Ehrenreich P."/>
            <person name="Baeumer S."/>
            <person name="Henne A."/>
            <person name="Liesegang H."/>
            <person name="Merkl R."/>
            <person name="Ehrenreich A."/>
            <person name="Gottschalk G."/>
        </authorList>
    </citation>
    <scope>NUCLEOTIDE SEQUENCE [LARGE SCALE GENOMIC DNA]</scope>
    <source>
        <strain>ATCC 14580 / DSM 13 / JCM 2505 / CCUG 7422 / NBRC 12200 / NCIMB 9375 / NCTC 10341 / NRRL NRS-1264 / Gibson 46</strain>
    </source>
</reference>
<reference key="2">
    <citation type="journal article" date="2004" name="Genome Biol.">
        <title>Complete genome sequence of the industrial bacterium Bacillus licheniformis and comparisons with closely related Bacillus species.</title>
        <authorList>
            <person name="Rey M.W."/>
            <person name="Ramaiya P."/>
            <person name="Nelson B.A."/>
            <person name="Brody-Karpin S.D."/>
            <person name="Zaretsky E.J."/>
            <person name="Tang M."/>
            <person name="Lopez de Leon A."/>
            <person name="Xiang H."/>
            <person name="Gusti V."/>
            <person name="Clausen I.G."/>
            <person name="Olsen P.B."/>
            <person name="Rasmussen M.D."/>
            <person name="Andersen J.T."/>
            <person name="Joergensen P.L."/>
            <person name="Larsen T.S."/>
            <person name="Sorokin A."/>
            <person name="Bolotin A."/>
            <person name="Lapidus A."/>
            <person name="Galleron N."/>
            <person name="Ehrlich S.D."/>
            <person name="Berka R.M."/>
        </authorList>
    </citation>
    <scope>NUCLEOTIDE SEQUENCE [LARGE SCALE GENOMIC DNA]</scope>
    <source>
        <strain>ATCC 14580 / DSM 13 / JCM 2505 / CCUG 7422 / NBRC 12200 / NCIMB 9375 / NCTC 10341 / NRRL NRS-1264 / Gibson 46</strain>
    </source>
</reference>
<evidence type="ECO:0000255" key="1">
    <source>
        <dbReference type="HAMAP-Rule" id="MF_00632"/>
    </source>
</evidence>